<comment type="function">
    <text evidence="1 11 13">Catalyzes the condensation of (S)-aspartate-beta-semialdehyde [(S)-ASA] and pyruvate to 4-hydroxy-tetrahydrodipicolinate (HTPA).</text>
</comment>
<comment type="catalytic activity">
    <reaction evidence="1 11 13">
        <text>L-aspartate 4-semialdehyde + pyruvate = (2S,4S)-4-hydroxy-2,3,4,5-tetrahydrodipicolinate + H2O + H(+)</text>
        <dbReference type="Rhea" id="RHEA:34171"/>
        <dbReference type="ChEBI" id="CHEBI:15361"/>
        <dbReference type="ChEBI" id="CHEBI:15377"/>
        <dbReference type="ChEBI" id="CHEBI:15378"/>
        <dbReference type="ChEBI" id="CHEBI:67139"/>
        <dbReference type="ChEBI" id="CHEBI:537519"/>
        <dbReference type="EC" id="4.3.3.7"/>
    </reaction>
</comment>
<comment type="activity regulation">
    <text evidence="2 7 14">Is allosterically regulated by the feedback inhibitor (S)-lysine. Is inhibited by pyruvate analogs such as 3-fluoropyruvate, 2-ketobutyrate, glyoxylate, and beta-hydroxypyruvate. Is not inhibited by its substrate, (S)-ASA.</text>
</comment>
<comment type="biophysicochemical properties">
    <kinetics>
        <KM evidence="2 3">0.26 mM for pyruvate</KM>
        <KM evidence="2 3">0.11 mM for L-aspartate-4-semialdehyde</KM>
        <Vmax evidence="2 3">0.58 umol/sec/mg enzyme</Vmax>
        <text>kcat is 124 sec(-1).</text>
    </kinetics>
</comment>
<comment type="pathway">
    <text evidence="1">Amino-acid biosynthesis; L-lysine biosynthesis via DAP pathway; (S)-tetrahydrodipicolinate from L-aspartate: step 3/4.</text>
</comment>
<comment type="subunit">
    <text evidence="1 4 6 8 10 12 15">Homotetramer; dimer of dimers.</text>
</comment>
<comment type="interaction">
    <interactant intactId="EBI-907527">
        <id>P0A6L2</id>
    </interactant>
    <interactant intactId="EBI-907527">
        <id>P0A6L2</id>
        <label>dapA</label>
    </interactant>
    <organismsDiffer>false</organismsDiffer>
    <experiments>2</experiments>
</comment>
<comment type="subcellular location">
    <subcellularLocation>
        <location>Cytoplasm</location>
    </subcellularLocation>
</comment>
<comment type="mass spectrometry" mass="31272.0" error="1.0" method="Electrospray" evidence="2"/>
<comment type="mass spectrometry" mass="31270.0" method="Electrospray" evidence="7"/>
<comment type="similarity">
    <text evidence="1">Belongs to the DapA family.</text>
</comment>
<comment type="caution">
    <text evidence="17 18">Was originally thought to be a dihydrodipicolinate synthase (DHDPS), catalyzing the condensation of (S)-aspartate-beta-semialdehyde [(S)-ASA] and pyruvate to dihydrodipicolinate (DHDP). However, it was shown that the product of the enzymatic reaction is not dihydrodipicolinate but in fact (4S)-4-hydroxy-2,3,4,5-tetrahydro-(2S)-dipicolinic acid (HTPA), and that the consecutive dehydration reaction leading to DHDP is not spontaneous but catalyzed by DapB (PubMed:20503968, PubMed:8993314).</text>
</comment>
<evidence type="ECO:0000255" key="1">
    <source>
        <dbReference type="HAMAP-Rule" id="MF_00418"/>
    </source>
</evidence>
<evidence type="ECO:0000269" key="2">
    <source>
    </source>
</evidence>
<evidence type="ECO:0000269" key="3">
    <source>
    </source>
</evidence>
<evidence type="ECO:0000269" key="4">
    <source>
    </source>
</evidence>
<evidence type="ECO:0000269" key="5">
    <source>
    </source>
</evidence>
<evidence type="ECO:0000269" key="6">
    <source>
    </source>
</evidence>
<evidence type="ECO:0000269" key="7">
    <source>
    </source>
</evidence>
<evidence type="ECO:0000269" key="8">
    <source>
    </source>
</evidence>
<evidence type="ECO:0000269" key="9">
    <source>
    </source>
</evidence>
<evidence type="ECO:0000269" key="10">
    <source>
    </source>
</evidence>
<evidence type="ECO:0000269" key="11">
    <source>
    </source>
</evidence>
<evidence type="ECO:0000269" key="12">
    <source>
    </source>
</evidence>
<evidence type="ECO:0000269" key="13">
    <source>
    </source>
</evidence>
<evidence type="ECO:0000269" key="14">
    <source>
    </source>
</evidence>
<evidence type="ECO:0000269" key="15">
    <source ref="22"/>
</evidence>
<evidence type="ECO:0000305" key="16"/>
<evidence type="ECO:0000305" key="17">
    <source>
    </source>
</evidence>
<evidence type="ECO:0000305" key="18">
    <source>
    </source>
</evidence>
<evidence type="ECO:0007829" key="19">
    <source>
        <dbReference type="PDB" id="2OJP"/>
    </source>
</evidence>
<evidence type="ECO:0007829" key="20">
    <source>
        <dbReference type="PDB" id="2PUR"/>
    </source>
</evidence>
<accession>P0A6L2</accession>
<accession>P05640</accession>
<accession>P78223</accession>
<sequence length="292" mass="31270">MFTGSIVAIVTPMDEKGNVCRASLKKLIDYHVASGTSAIVSVGTTGESATLNHDEHADVVMMTLDLADGRIPVIAGTGANATAEAISLTQRFNDSGIVGCLTVTPYYNRPSQEGLYQHFKAIAEHTDLPQILYNVPSRTGCDLLPETVGRLAKVKNIIGIKEATGNLTRVNQIKELVSDDFVLLSGDDASALDFMQLGGHGVISVTANVAARDMAQMCKLAAEGHFAEARVINQRLMPLHNKLFVEPNPIPVKWACKELGLVATDTLRLPMTPITDSGRETVRAALKHAGLL</sequence>
<keyword id="KW-0002">3D-structure</keyword>
<keyword id="KW-0021">Allosteric enzyme</keyword>
<keyword id="KW-0028">Amino-acid biosynthesis</keyword>
<keyword id="KW-0963">Cytoplasm</keyword>
<keyword id="KW-0220">Diaminopimelate biosynthesis</keyword>
<keyword id="KW-0903">Direct protein sequencing</keyword>
<keyword id="KW-0456">Lyase</keyword>
<keyword id="KW-0457">Lysine biosynthesis</keyword>
<keyword id="KW-1185">Reference proteome</keyword>
<keyword id="KW-0704">Schiff base</keyword>
<dbReference type="EC" id="4.3.3.7" evidence="1"/>
<dbReference type="EMBL" id="M12844">
    <property type="protein sequence ID" value="AAA23665.1"/>
    <property type="molecule type" value="Genomic_DNA"/>
</dbReference>
<dbReference type="EMBL" id="U00096">
    <property type="protein sequence ID" value="AAC75531.1"/>
    <property type="molecule type" value="Genomic_DNA"/>
</dbReference>
<dbReference type="EMBL" id="AP009048">
    <property type="protein sequence ID" value="BAA16355.1"/>
    <property type="molecule type" value="Genomic_DNA"/>
</dbReference>
<dbReference type="EMBL" id="M33928">
    <property type="status" value="NOT_ANNOTATED_CDS"/>
    <property type="molecule type" value="Genomic_DNA"/>
</dbReference>
<dbReference type="EMBL" id="X57402">
    <property type="protein sequence ID" value="CAA40660.1"/>
    <property type="molecule type" value="Genomic_DNA"/>
</dbReference>
<dbReference type="PIR" id="E65023">
    <property type="entry name" value="SYECDP"/>
</dbReference>
<dbReference type="RefSeq" id="NP_416973.1">
    <property type="nucleotide sequence ID" value="NC_000913.3"/>
</dbReference>
<dbReference type="RefSeq" id="WP_001311023.1">
    <property type="nucleotide sequence ID" value="NZ_LN832404.1"/>
</dbReference>
<dbReference type="PDB" id="1DHP">
    <property type="method" value="X-ray"/>
    <property type="resolution" value="2.30 A"/>
    <property type="chains" value="A/B=1-292"/>
</dbReference>
<dbReference type="PDB" id="1S5T">
    <property type="method" value="X-ray"/>
    <property type="resolution" value="2.30 A"/>
    <property type="chains" value="A/B=1-292"/>
</dbReference>
<dbReference type="PDB" id="1S5V">
    <property type="method" value="X-ray"/>
    <property type="resolution" value="2.35 A"/>
    <property type="chains" value="A/B=1-292"/>
</dbReference>
<dbReference type="PDB" id="1S5W">
    <property type="method" value="X-ray"/>
    <property type="resolution" value="2.32 A"/>
    <property type="chains" value="A/B=1-292"/>
</dbReference>
<dbReference type="PDB" id="1YXC">
    <property type="method" value="X-ray"/>
    <property type="resolution" value="1.90 A"/>
    <property type="chains" value="A/B=1-292"/>
</dbReference>
<dbReference type="PDB" id="1YXD">
    <property type="method" value="X-ray"/>
    <property type="resolution" value="2.00 A"/>
    <property type="chains" value="A/B=1-292"/>
</dbReference>
<dbReference type="PDB" id="2A6L">
    <property type="method" value="X-ray"/>
    <property type="resolution" value="2.05 A"/>
    <property type="chains" value="A/B=1-292"/>
</dbReference>
<dbReference type="PDB" id="2A6N">
    <property type="method" value="X-ray"/>
    <property type="resolution" value="1.94 A"/>
    <property type="chains" value="A/B=1-292"/>
</dbReference>
<dbReference type="PDB" id="2ATS">
    <property type="method" value="X-ray"/>
    <property type="resolution" value="1.90 A"/>
    <property type="chains" value="A/B=1-292"/>
</dbReference>
<dbReference type="PDB" id="2OJP">
    <property type="method" value="X-ray"/>
    <property type="resolution" value="1.70 A"/>
    <property type="chains" value="A/B=1-292"/>
</dbReference>
<dbReference type="PDB" id="2PUR">
    <property type="method" value="X-ray"/>
    <property type="resolution" value="1.70 A"/>
    <property type="chains" value="A/B=1-292"/>
</dbReference>
<dbReference type="PDB" id="3C0J">
    <property type="method" value="X-ray"/>
    <property type="resolution" value="2.40 A"/>
    <property type="chains" value="A/B=1-292"/>
</dbReference>
<dbReference type="PDB" id="3DEN">
    <property type="method" value="X-ray"/>
    <property type="resolution" value="2.20 A"/>
    <property type="chains" value="A/B=1-292"/>
</dbReference>
<dbReference type="PDB" id="3DU0">
    <property type="method" value="X-ray"/>
    <property type="resolution" value="2.00 A"/>
    <property type="chains" value="A/B=1-292"/>
</dbReference>
<dbReference type="PDB" id="3I7Q">
    <property type="method" value="X-ray"/>
    <property type="resolution" value="2.00 A"/>
    <property type="chains" value="A/B=1-292"/>
</dbReference>
<dbReference type="PDB" id="3I7R">
    <property type="method" value="X-ray"/>
    <property type="resolution" value="2.10 A"/>
    <property type="chains" value="A/B=1-292"/>
</dbReference>
<dbReference type="PDB" id="3I7S">
    <property type="method" value="X-ray"/>
    <property type="resolution" value="2.30 A"/>
    <property type="chains" value="A/B=1-292"/>
</dbReference>
<dbReference type="PDB" id="4EOU">
    <property type="method" value="X-ray"/>
    <property type="resolution" value="2.30 A"/>
    <property type="chains" value="A/B=1-292"/>
</dbReference>
<dbReference type="PDB" id="5T25">
    <property type="method" value="X-ray"/>
    <property type="resolution" value="1.99 A"/>
    <property type="chains" value="A/B=1-292"/>
</dbReference>
<dbReference type="PDB" id="5T26">
    <property type="method" value="X-ray"/>
    <property type="resolution" value="2.10 A"/>
    <property type="chains" value="A/B=1-292"/>
</dbReference>
<dbReference type="PDB" id="7JZ7">
    <property type="method" value="X-ray"/>
    <property type="resolution" value="1.74 A"/>
    <property type="chains" value="A/B=1-292"/>
</dbReference>
<dbReference type="PDB" id="7JZ8">
    <property type="method" value="X-ray"/>
    <property type="resolution" value="1.82 A"/>
    <property type="chains" value="A/B=1-292"/>
</dbReference>
<dbReference type="PDB" id="7JZ9">
    <property type="method" value="X-ray"/>
    <property type="resolution" value="1.82 A"/>
    <property type="chains" value="A/B=1-292"/>
</dbReference>
<dbReference type="PDB" id="7JZA">
    <property type="method" value="X-ray"/>
    <property type="resolution" value="1.82 A"/>
    <property type="chains" value="A/B=1-292"/>
</dbReference>
<dbReference type="PDB" id="7JZB">
    <property type="method" value="X-ray"/>
    <property type="resolution" value="1.93 A"/>
    <property type="chains" value="A/B=1-292"/>
</dbReference>
<dbReference type="PDB" id="7JZC">
    <property type="method" value="X-ray"/>
    <property type="resolution" value="2.07 A"/>
    <property type="chains" value="A/B=1-292"/>
</dbReference>
<dbReference type="PDB" id="7JZD">
    <property type="method" value="X-ray"/>
    <property type="resolution" value="1.91 A"/>
    <property type="chains" value="A/B=1-292"/>
</dbReference>
<dbReference type="PDB" id="7JZE">
    <property type="method" value="X-ray"/>
    <property type="resolution" value="2.00 A"/>
    <property type="chains" value="A/B=1-292"/>
</dbReference>
<dbReference type="PDB" id="7JZF">
    <property type="method" value="X-ray"/>
    <property type="resolution" value="1.82 A"/>
    <property type="chains" value="A/B=1-292"/>
</dbReference>
<dbReference type="PDB" id="7JZG">
    <property type="method" value="X-ray"/>
    <property type="resolution" value="1.82 A"/>
    <property type="chains" value="A/B=1-292"/>
</dbReference>
<dbReference type="PDBsum" id="1DHP"/>
<dbReference type="PDBsum" id="1S5T"/>
<dbReference type="PDBsum" id="1S5V"/>
<dbReference type="PDBsum" id="1S5W"/>
<dbReference type="PDBsum" id="1YXC"/>
<dbReference type="PDBsum" id="1YXD"/>
<dbReference type="PDBsum" id="2A6L"/>
<dbReference type="PDBsum" id="2A6N"/>
<dbReference type="PDBsum" id="2ATS"/>
<dbReference type="PDBsum" id="2OJP"/>
<dbReference type="PDBsum" id="2PUR"/>
<dbReference type="PDBsum" id="3C0J"/>
<dbReference type="PDBsum" id="3DEN"/>
<dbReference type="PDBsum" id="3DU0"/>
<dbReference type="PDBsum" id="3I7Q"/>
<dbReference type="PDBsum" id="3I7R"/>
<dbReference type="PDBsum" id="3I7S"/>
<dbReference type="PDBsum" id="4EOU"/>
<dbReference type="PDBsum" id="5T25"/>
<dbReference type="PDBsum" id="5T26"/>
<dbReference type="PDBsum" id="7JZ7"/>
<dbReference type="PDBsum" id="7JZ8"/>
<dbReference type="PDBsum" id="7JZ9"/>
<dbReference type="PDBsum" id="7JZA"/>
<dbReference type="PDBsum" id="7JZB"/>
<dbReference type="PDBsum" id="7JZC"/>
<dbReference type="PDBsum" id="7JZD"/>
<dbReference type="PDBsum" id="7JZE"/>
<dbReference type="PDBsum" id="7JZF"/>
<dbReference type="PDBsum" id="7JZG"/>
<dbReference type="SMR" id="P0A6L2"/>
<dbReference type="BioGRID" id="4261968">
    <property type="interactions" value="57"/>
</dbReference>
<dbReference type="BioGRID" id="851291">
    <property type="interactions" value="1"/>
</dbReference>
<dbReference type="FunCoup" id="P0A6L2">
    <property type="interactions" value="698"/>
</dbReference>
<dbReference type="IntAct" id="P0A6L2">
    <property type="interactions" value="3"/>
</dbReference>
<dbReference type="STRING" id="511145.b2478"/>
<dbReference type="BindingDB" id="P0A6L2"/>
<dbReference type="ChEMBL" id="CHEMBL4083"/>
<dbReference type="DrugCentral" id="P0A6L2"/>
<dbReference type="jPOST" id="P0A6L2"/>
<dbReference type="PaxDb" id="511145-b2478"/>
<dbReference type="EnsemblBacteria" id="AAC75531">
    <property type="protein sequence ID" value="AAC75531"/>
    <property type="gene ID" value="b2478"/>
</dbReference>
<dbReference type="GeneID" id="946952"/>
<dbReference type="KEGG" id="ecj:JW2463"/>
<dbReference type="KEGG" id="eco:b2478"/>
<dbReference type="KEGG" id="ecoc:C3026_13755"/>
<dbReference type="PATRIC" id="fig|1411691.4.peg.4261"/>
<dbReference type="EchoBASE" id="EB0201"/>
<dbReference type="eggNOG" id="COG0329">
    <property type="taxonomic scope" value="Bacteria"/>
</dbReference>
<dbReference type="HOGENOM" id="CLU_049343_7_1_6"/>
<dbReference type="InParanoid" id="P0A6L2"/>
<dbReference type="OMA" id="GMDACVP"/>
<dbReference type="OrthoDB" id="9782828at2"/>
<dbReference type="PhylomeDB" id="P0A6L2"/>
<dbReference type="BioCyc" id="EcoCyc:DIHYDRODIPICSYN-MONOMER"/>
<dbReference type="BioCyc" id="MetaCyc:DIHYDRODIPICSYN-MONOMER"/>
<dbReference type="BRENDA" id="4.3.3.7">
    <property type="organism ID" value="2026"/>
</dbReference>
<dbReference type="SABIO-RK" id="P0A6L2"/>
<dbReference type="UniPathway" id="UPA00034">
    <property type="reaction ID" value="UER00017"/>
</dbReference>
<dbReference type="EvolutionaryTrace" id="P0A6L2"/>
<dbReference type="PRO" id="PR:P0A6L2"/>
<dbReference type="Proteomes" id="UP000000625">
    <property type="component" value="Chromosome"/>
</dbReference>
<dbReference type="GO" id="GO:0005829">
    <property type="term" value="C:cytosol"/>
    <property type="evidence" value="ECO:0000314"/>
    <property type="project" value="EcoCyc"/>
</dbReference>
<dbReference type="GO" id="GO:0008840">
    <property type="term" value="F:4-hydroxy-tetrahydrodipicolinate synthase activity"/>
    <property type="evidence" value="ECO:0000314"/>
    <property type="project" value="EcoCyc"/>
</dbReference>
<dbReference type="GO" id="GO:0042802">
    <property type="term" value="F:identical protein binding"/>
    <property type="evidence" value="ECO:0000314"/>
    <property type="project" value="EcoCyc"/>
</dbReference>
<dbReference type="GO" id="GO:0019877">
    <property type="term" value="P:diaminopimelate biosynthetic process"/>
    <property type="evidence" value="ECO:0000314"/>
    <property type="project" value="EcoliWiki"/>
</dbReference>
<dbReference type="GO" id="GO:0009089">
    <property type="term" value="P:lysine biosynthetic process via diaminopimelate"/>
    <property type="evidence" value="ECO:0007669"/>
    <property type="project" value="UniProtKB-UniRule"/>
</dbReference>
<dbReference type="CDD" id="cd00950">
    <property type="entry name" value="DHDPS"/>
    <property type="match status" value="1"/>
</dbReference>
<dbReference type="FunFam" id="3.20.20.70:FF:000046">
    <property type="entry name" value="4-hydroxy-tetrahydrodipicolinate synthase"/>
    <property type="match status" value="1"/>
</dbReference>
<dbReference type="Gene3D" id="3.20.20.70">
    <property type="entry name" value="Aldolase class I"/>
    <property type="match status" value="1"/>
</dbReference>
<dbReference type="HAMAP" id="MF_00418">
    <property type="entry name" value="DapA"/>
    <property type="match status" value="1"/>
</dbReference>
<dbReference type="InterPro" id="IPR013785">
    <property type="entry name" value="Aldolase_TIM"/>
</dbReference>
<dbReference type="InterPro" id="IPR005263">
    <property type="entry name" value="DapA"/>
</dbReference>
<dbReference type="InterPro" id="IPR002220">
    <property type="entry name" value="DapA-like"/>
</dbReference>
<dbReference type="InterPro" id="IPR020625">
    <property type="entry name" value="Schiff_base-form_aldolases_AS"/>
</dbReference>
<dbReference type="InterPro" id="IPR020624">
    <property type="entry name" value="Schiff_base-form_aldolases_CS"/>
</dbReference>
<dbReference type="NCBIfam" id="TIGR00674">
    <property type="entry name" value="dapA"/>
    <property type="match status" value="1"/>
</dbReference>
<dbReference type="PANTHER" id="PTHR12128:SF66">
    <property type="entry name" value="4-HYDROXY-2-OXOGLUTARATE ALDOLASE, MITOCHONDRIAL"/>
    <property type="match status" value="1"/>
</dbReference>
<dbReference type="PANTHER" id="PTHR12128">
    <property type="entry name" value="DIHYDRODIPICOLINATE SYNTHASE"/>
    <property type="match status" value="1"/>
</dbReference>
<dbReference type="Pfam" id="PF00701">
    <property type="entry name" value="DHDPS"/>
    <property type="match status" value="1"/>
</dbReference>
<dbReference type="PIRSF" id="PIRSF001365">
    <property type="entry name" value="DHDPS"/>
    <property type="match status" value="1"/>
</dbReference>
<dbReference type="PRINTS" id="PR00146">
    <property type="entry name" value="DHPICSNTHASE"/>
</dbReference>
<dbReference type="SMART" id="SM01130">
    <property type="entry name" value="DHDPS"/>
    <property type="match status" value="1"/>
</dbReference>
<dbReference type="SUPFAM" id="SSF51569">
    <property type="entry name" value="Aldolase"/>
    <property type="match status" value="1"/>
</dbReference>
<dbReference type="PROSITE" id="PS00665">
    <property type="entry name" value="DHDPS_1"/>
    <property type="match status" value="1"/>
</dbReference>
<dbReference type="PROSITE" id="PS00666">
    <property type="entry name" value="DHDPS_2"/>
    <property type="match status" value="1"/>
</dbReference>
<proteinExistence type="evidence at protein level"/>
<protein>
    <recommendedName>
        <fullName evidence="1">4-hydroxy-tetrahydrodipicolinate synthase</fullName>
        <shortName evidence="1">HTPA synthase</shortName>
        <ecNumber evidence="1">4.3.3.7</ecNumber>
    </recommendedName>
</protein>
<reference key="1">
    <citation type="journal article" date="1986" name="J. Bacteriol.">
        <title>Chromosomal location and nucleotide sequence of the Escherichia coli dapA gene.</title>
        <authorList>
            <person name="Richaud F."/>
            <person name="Richaud C."/>
            <person name="Ratet P."/>
            <person name="Patte J.-C."/>
        </authorList>
    </citation>
    <scope>NUCLEOTIDE SEQUENCE [GENOMIC DNA]</scope>
</reference>
<reference key="2">
    <citation type="journal article" date="1997" name="DNA Res.">
        <title>Construction of a contiguous 874-kb sequence of the Escherichia coli-K12 genome corresponding to 50.0-68.8 min on the linkage map and analysis of its sequence features.</title>
        <authorList>
            <person name="Yamamoto Y."/>
            <person name="Aiba H."/>
            <person name="Baba T."/>
            <person name="Hayashi K."/>
            <person name="Inada T."/>
            <person name="Isono K."/>
            <person name="Itoh T."/>
            <person name="Kimura S."/>
            <person name="Kitagawa M."/>
            <person name="Makino K."/>
            <person name="Miki T."/>
            <person name="Mitsuhashi N."/>
            <person name="Mizobuchi K."/>
            <person name="Mori H."/>
            <person name="Nakade S."/>
            <person name="Nakamura Y."/>
            <person name="Nashimoto H."/>
            <person name="Oshima T."/>
            <person name="Oyama S."/>
            <person name="Saito N."/>
            <person name="Sampei G."/>
            <person name="Satoh Y."/>
            <person name="Sivasundaram S."/>
            <person name="Tagami H."/>
            <person name="Takahashi H."/>
            <person name="Takeda J."/>
            <person name="Takemoto K."/>
            <person name="Uehara K."/>
            <person name="Wada C."/>
            <person name="Yamagata S."/>
            <person name="Horiuchi T."/>
        </authorList>
    </citation>
    <scope>NUCLEOTIDE SEQUENCE [LARGE SCALE GENOMIC DNA]</scope>
    <source>
        <strain>K12 / W3110 / ATCC 27325 / DSM 5911</strain>
    </source>
</reference>
<reference key="3">
    <citation type="journal article" date="1997" name="Science">
        <title>The complete genome sequence of Escherichia coli K-12.</title>
        <authorList>
            <person name="Blattner F.R."/>
            <person name="Plunkett G. III"/>
            <person name="Bloch C.A."/>
            <person name="Perna N.T."/>
            <person name="Burland V."/>
            <person name="Riley M."/>
            <person name="Collado-Vides J."/>
            <person name="Glasner J.D."/>
            <person name="Rode C.K."/>
            <person name="Mayhew G.F."/>
            <person name="Gregor J."/>
            <person name="Davis N.W."/>
            <person name="Kirkpatrick H.A."/>
            <person name="Goeden M.A."/>
            <person name="Rose D.J."/>
            <person name="Mau B."/>
            <person name="Shao Y."/>
        </authorList>
    </citation>
    <scope>NUCLEOTIDE SEQUENCE [LARGE SCALE GENOMIC DNA]</scope>
    <source>
        <strain>K12 / MG1655 / ATCC 47076</strain>
    </source>
</reference>
<reference key="4">
    <citation type="journal article" date="2006" name="Mol. Syst. Biol.">
        <title>Highly accurate genome sequences of Escherichia coli K-12 strains MG1655 and W3110.</title>
        <authorList>
            <person name="Hayashi K."/>
            <person name="Morooka N."/>
            <person name="Yamamoto Y."/>
            <person name="Fujita K."/>
            <person name="Isono K."/>
            <person name="Choi S."/>
            <person name="Ohtsubo E."/>
            <person name="Baba T."/>
            <person name="Wanner B.L."/>
            <person name="Mori H."/>
            <person name="Horiuchi T."/>
        </authorList>
    </citation>
    <scope>NUCLEOTIDE SEQUENCE [LARGE SCALE GENOMIC DNA]</scope>
    <source>
        <strain>K12 / W3110 / ATCC 27325 / DSM 5911</strain>
    </source>
</reference>
<reference key="5">
    <citation type="submission" date="1996-02" db="UniProtKB">
        <authorList>
            <person name="Frutiger S."/>
            <person name="Hughes G.J."/>
            <person name="Pasquali C."/>
            <person name="Hochstrasser D.F."/>
        </authorList>
    </citation>
    <scope>PROTEIN SEQUENCE OF 1-11</scope>
    <source>
        <strain>K12 / W3110 / ATCC 27325 / DSM 5911</strain>
    </source>
</reference>
<reference key="6">
    <citation type="journal article" date="1997" name="Electrophoresis">
        <title>Comparing the predicted and observed properties of proteins encoded in the genome of Escherichia coli K-12.</title>
        <authorList>
            <person name="Link A.J."/>
            <person name="Robison K."/>
            <person name="Church G.M."/>
        </authorList>
    </citation>
    <scope>PROTEIN SEQUENCE OF 1-12</scope>
    <source>
        <strain>K12 / EMG2</strain>
    </source>
</reference>
<reference key="7">
    <citation type="journal article" date="1998" name="J. Mol. Biol.">
        <title>Protein identification with N and C-terminal sequence tags in proteome projects.</title>
        <authorList>
            <person name="Wilkins M.R."/>
            <person name="Gasteiger E."/>
            <person name="Tonella L."/>
            <person name="Ou K."/>
            <person name="Tyler M."/>
            <person name="Sanchez J.-C."/>
            <person name="Gooley A.A."/>
            <person name="Walsh B.J."/>
            <person name="Bairoch A."/>
            <person name="Appel R.D."/>
            <person name="Williams K.L."/>
            <person name="Hochstrasser D.F."/>
        </authorList>
    </citation>
    <scope>PROTEIN SEQUENCE OF 1-4</scope>
    <source>
        <strain>K12 / W3110 / ATCC 27325 / DSM 5911</strain>
    </source>
</reference>
<reference key="8">
    <citation type="journal article" date="1992" name="Biochem. J.">
        <title>Escherichia coli dihydrodipicolinate synthase. Identification of the active site and crystallization.</title>
        <authorList>
            <person name="Laber B."/>
            <person name="Gomis-Rueth F.-X."/>
            <person name="Romao M.J."/>
            <person name="Huber R."/>
        </authorList>
    </citation>
    <scope>PROTEIN SEQUENCE OF 156-167</scope>
    <scope>ACTIVE SITE</scope>
</reference>
<reference key="9">
    <citation type="journal article" date="1990" name="J. Bacteriol.">
        <title>DNA sequence of the purC gene encoding 5'-phosphoribosyl-5-aminoimidazole-4-N-succinocarboxamide synthetase and organization of the dapA-purC region of Escherichia coli K-12.</title>
        <authorList>
            <person name="Tiedemann A.A."/>
            <person name="Demarini D.J."/>
            <person name="Parker J."/>
            <person name="Smith J.M."/>
        </authorList>
    </citation>
    <scope>NUCLEOTIDE SEQUENCE [GENOMIC DNA] OF 288-292</scope>
    <source>
        <strain>K12</strain>
    </source>
</reference>
<reference key="10">
    <citation type="journal article" date="1991" name="J. Bacteriol.">
        <title>A gene for a new lipoprotein in the dapA-purC interval of the Escherichia coli chromosome.</title>
        <authorList>
            <person name="Bouvier J."/>
            <person name="Pugsley A.P."/>
            <person name="Stragier P."/>
        </authorList>
    </citation>
    <scope>NUCLEOTIDE SEQUENCE [GENOMIC DNA] OF 288-292</scope>
    <source>
        <strain>K12</strain>
    </source>
</reference>
<reference key="11">
    <citation type="journal article" date="1997" name="Electrophoresis">
        <title>Escherichia coli proteome analysis using the gene-protein database.</title>
        <authorList>
            <person name="VanBogelen R.A."/>
            <person name="Abshire K.Z."/>
            <person name="Moldover B."/>
            <person name="Olson E.R."/>
            <person name="Neidhardt F.C."/>
        </authorList>
    </citation>
    <scope>IDENTIFICATION BY 2D-GEL</scope>
</reference>
<reference key="12">
    <citation type="journal article" date="1997" name="Biochemistry">
        <title>Dihydrodipicolinate synthase from Escherichia coli: pH dependent changes in the kinetic mechanism and kinetic mechanism of allosteric inhibition by L-lysine.</title>
        <authorList>
            <person name="Karsten W.E."/>
        </authorList>
    </citation>
    <scope>ACTIVITY REGULATION</scope>
</reference>
<reference key="13">
    <citation type="journal article" date="2004" name="Biochem. J.">
        <title>Dihydrodipicolinate synthase is not inhibited by its substrate, (S)-aspartate beta-semialdehyde.</title>
        <authorList>
            <person name="Dobson R.C."/>
            <person name="Gerrard J.A."/>
            <person name="Pearce F.G."/>
        </authorList>
    </citation>
    <scope>ACTIVITY REGULATION</scope>
    <scope>KINETIC PARAMETERS</scope>
    <scope>MASS SPECTROMETRY</scope>
</reference>
<reference key="14">
    <citation type="journal article" date="2008" name="Bioorg. Med. Chem.">
        <title>Irreversible inhibition of dihydrodipicolinate synthase by 4-oxo-heptenedioic acid analogues.</title>
        <authorList>
            <person name="Boughton B.A."/>
            <person name="Griffin M.D."/>
            <person name="O'Donnell P.A."/>
            <person name="Dobson R.C."/>
            <person name="Perugini M.A."/>
            <person name="Gerrard J.A."/>
            <person name="Hutton C.A."/>
        </authorList>
    </citation>
    <scope>SYNTHETIC INHIBITORS</scope>
</reference>
<reference key="15">
    <citation type="journal article" date="2010" name="J. Med. Chem.">
        <title>NMR studies uncover alternate substrates for dihydrodipicolinate synthase and suggest that dihydrodipicolinate reductase is also a dehydratase.</title>
        <authorList>
            <person name="Devenish S.R."/>
            <person name="Blunt J.W."/>
            <person name="Gerrard J.A."/>
        </authorList>
    </citation>
    <scope>FUNCTION</scope>
    <scope>CATALYTIC ACTIVITY</scope>
    <scope>IDENTIFICATION OF HTPA AS REACTION PRODUCT</scope>
    <scope>SUBSTRATE SPECIFICITY</scope>
</reference>
<reference key="16">
    <citation type="journal article" date="2012" name="Bioorg. Med. Chem.">
        <title>1,3-Phenylene bis(ketoacid) derivatives as inhibitors of Escherichia coli dihydrodipicolinate synthase.</title>
        <authorList>
            <person name="Boughton B.A."/>
            <person name="Hor L."/>
            <person name="Gerrard J.A."/>
            <person name="Hutton C.A."/>
        </authorList>
    </citation>
    <scope>SYNTHETIC INHIBITORS</scope>
</reference>
<reference key="17">
    <citation type="journal article" date="1995" name="J. Mol. Biol.">
        <title>The crystal structure of dihydrodipicolinate synthase from Escherichia coli at 2.5-A resolution.</title>
        <authorList>
            <person name="Mirwaldt C."/>
            <person name="Korndoerfer I."/>
            <person name="Huber R."/>
        </authorList>
    </citation>
    <scope>X-RAY CRYSTALLOGRAPHY (2.5 ANGSTROMS)</scope>
</reference>
<reference key="18">
    <citation type="journal article" date="1997" name="Biochemistry">
        <title>Reaction mechanism of Escherichia coli dihydrodipicolinate synthase investigated by X-ray crystallography and NMR spectroscopy.</title>
        <authorList>
            <person name="Blicking S."/>
            <person name="Renner C."/>
            <person name="Laber B."/>
            <person name="Pohlenz H.-D."/>
            <person name="Holak T.A."/>
            <person name="Huber R."/>
        </authorList>
    </citation>
    <scope>X-RAY CRYSTALLOGRAPHY (2.5 ANGSTROMS)</scope>
    <scope>FUNCTION</scope>
    <scope>CATALYTIC ACTIVITY</scope>
    <scope>IDENTIFICATION OF HTPA AS REACTION PRODUCT</scope>
    <scope>CATALYTIC MECHANISM</scope>
</reference>
<reference key="19">
    <citation type="journal article" date="2004" name="J. Mol. Biol.">
        <title>The crystal structure of three site-directed mutants of Escherichia coli dihydrodipicolinate synthase: further evidence for a catalytic triad.</title>
        <authorList>
            <person name="Dobson R.C.J."/>
            <person name="Valegaard K."/>
            <person name="Gerrard J.A."/>
        </authorList>
    </citation>
    <scope>X-RAY CRYSTALLOGRAPHY (2.35 ANGSTROMS) OF MUTANTS VAL-44; PHE-107 AND PHE-133</scope>
    <scope>KINETIC PARAMETERS</scope>
    <scope>MUTAGENESIS OF THR-44; TYR-107 AND TYR-133</scope>
    <scope>REACTION MECHANISM</scope>
</reference>
<reference key="20">
    <citation type="journal article" date="2005" name="Acta Crystallogr. D">
        <title>The crystal structures of native and (S)-lysine-bound dihydrodipicolinate synthase from Escherichia coli with improved resolution show new features of biological significance.</title>
        <authorList>
            <person name="Dobson R.C.J."/>
            <person name="Griffin M.D.W."/>
            <person name="Jameson G.B."/>
            <person name="Gerrard J.A."/>
        </authorList>
    </citation>
    <scope>X-RAY CRYSTALLOGRAPHY (1.9 ANGSTROMS) OF APOENZYME AND IN COMPLEX WITH ALLOSTERIC INHIBITOR (S)-LYSINE</scope>
    <scope>SUBUNIT</scope>
</reference>
<reference key="21">
    <citation type="journal article" date="2005" name="Biochemistry">
        <title>Role of arginine 138 in the catalysis and regulation of Escherichia coli dihydrodipicolinate synthase.</title>
        <authorList>
            <person name="Dobson R.C.J."/>
            <person name="Devenish S.R.A."/>
            <person name="Turner L.A."/>
            <person name="Clifford V.R."/>
            <person name="Pearce F.G."/>
            <person name="Jameson G.B."/>
            <person name="Gerrard J.A."/>
        </authorList>
    </citation>
    <scope>X-RAY CRYSTALLOGRAPHY (2.05 ANGSTROMS) OF MUTANTS ALA-138 AND HIS-138</scope>
    <scope>MUTAGENESIS OF ARG-138</scope>
</reference>
<reference key="22">
    <citation type="submission" date="2005-08" db="PDB data bank">
        <title>The co-crystallisation of (S)-lysine-bound dihydrodipicolinate synthase from E. coli indicates that domain movements are not responsible for (S)-lysine inhibition.</title>
        <authorList>
            <person name="Devenish S.R.A."/>
            <person name="Dobson R.C.J."/>
            <person name="Jameson G.B."/>
            <person name="Gerrard J.A."/>
        </authorList>
    </citation>
    <scope>X-RAY CRYSTALLOGRAPHY (1.90 ANGSTROMS) IN COMPLEX WITH LYSINE INHIBITOR</scope>
</reference>
<reference key="23">
    <citation type="journal article" date="2008" name="Acta Crystallogr. F">
        <title>The high-resolution structure of dihydrodipicolinate synthase from Escherichia coli bound to its first substrate, pyruvate.</title>
        <authorList>
            <person name="Devenish S.R."/>
            <person name="Gerrard J.A."/>
            <person name="Jameson G.B."/>
            <person name="Dobson R.C."/>
        </authorList>
    </citation>
    <scope>X-RAY CRYSTALLOGRAPHY (2.00 ANGSTROMS)</scope>
</reference>
<reference key="24">
    <citation type="journal article" date="2008" name="Biochemistry">
        <title>Mutating the tight-dimer interface of dihydrodipicolinate synthase disrupts the enzyme quaternary structure: toward a monomeric enzyme.</title>
        <authorList>
            <person name="Pearce F.G."/>
            <person name="Dobson R.C."/>
            <person name="Weber A."/>
            <person name="Lane L.A."/>
            <person name="McCammon M.G."/>
            <person name="Squire M.A."/>
            <person name="Perugini M.A."/>
            <person name="Jameson G.B."/>
            <person name="Robinson C.V."/>
            <person name="Gerrard J.A."/>
        </authorList>
    </citation>
    <scope>X-RAY CRYSTALLOGRAPHY (2.20 ANGSTROMS) OF MUTANT TRP-107</scope>
    <scope>SUBUNIT</scope>
    <scope>MUTAGENESIS OF TYR-107</scope>
</reference>
<reference key="25">
    <citation type="journal article" date="2008" name="J. Mol. Biol.">
        <title>Evolution of quaternary structure in a homotetrameric enzyme.</title>
        <authorList>
            <person name="Griffin M.D."/>
            <person name="Dobson R.C."/>
            <person name="Pearce F.G."/>
            <person name="Antonio L."/>
            <person name="Whitten A.E."/>
            <person name="Liew C.K."/>
            <person name="Mackay J.P."/>
            <person name="Trewhella J."/>
            <person name="Jameson G.B."/>
            <person name="Perugini M.A."/>
            <person name="Gerrard J.A."/>
        </authorList>
    </citation>
    <scope>X-RAY CRYSTALLOGRAPHY (1.70 ANGSTROMS) OF MUTANT TYR-197</scope>
    <scope>SUBUNIT</scope>
    <scope>MUTAGENESIS OF LEU-197</scope>
</reference>
<reference key="26">
    <citation type="journal article" date="2008" name="Protein Sci.">
        <title>Conserved main-chain peptide distortions: a proposed role for Ile203 in catalysis by dihydrodipicolinate synthase.</title>
        <authorList>
            <person name="Dobson R.C."/>
            <person name="Griffin M.D."/>
            <person name="Devenish S.R."/>
            <person name="Pearce F.G."/>
            <person name="Hutton C.A."/>
            <person name="Gerrard J.A."/>
            <person name="Jameson G.B."/>
            <person name="Perugini M.A."/>
        </authorList>
    </citation>
    <scope>X-RAY CRYSTALLOGRAPHY (2.40 ANGSTROMS)</scope>
    <scope>ACTIVITY REGULATION</scope>
    <scope>MASS SPECTROMETRY</scope>
</reference>
<reference key="27">
    <citation type="journal article" date="2009" name="Biochimie">
        <title>Specificity versus catalytic potency: The role of threonine 44 in Escherichia coli dihydrodipicolinate synthase mediated catalysis.</title>
        <authorList>
            <person name="Dobson R.C."/>
            <person name="Perugini M.A."/>
            <person name="Jameson G.B."/>
            <person name="Gerrard J.A."/>
        </authorList>
    </citation>
    <scope>X-RAY CRYSTALLOGRAPHY (1.70 ANGSTROMS) OF MUTANT SER-44</scope>
    <scope>MUTAGENESIS OF THR-44</scope>
    <scope>ACTIVE SITES</scope>
    <scope>REACTION MECHANISM</scope>
</reference>
<reference key="28">
    <citation type="journal article" date="2010" name="Biochimie">
        <title>How essential is the 'essential' active-site lysine in dihydrodipicolinate synthase?</title>
        <authorList>
            <person name="Soares da Costa T.P."/>
            <person name="Muscroft-Taylor A.C."/>
            <person name="Dobson R.C."/>
            <person name="Devenish S.R."/>
            <person name="Jameson G.B."/>
            <person name="Gerrard J.A."/>
        </authorList>
    </citation>
    <scope>X-RAY CRYSTALLOGRAPHY (2.00 ANGSTROMS) OF MUTANTS ALA-161 AND ARG-161 OF NATIVE PROTEIN AND IN COMPLEX WITH PYRUVATE</scope>
    <scope>MUTAGENESIS OF LYS-161</scope>
</reference>
<reference key="29">
    <citation type="journal article" date="2012" name="Proteins">
        <title>The crystal structure of dihydrodipicolinate synthase from Escherichia coli with bound pyruvate and succinic acid semialdehyde: unambiguous resolution of the stereochemistry of the condensation product.</title>
        <authorList>
            <person name="Boughton B.A."/>
            <person name="Dobson R.C."/>
            <person name="Hutton C.A."/>
        </authorList>
    </citation>
    <scope>X-RAY CRYSTALLOGRAPHY (2.30 ANGSTROMS) IN COMPLEX WITH PYRUVATE AND SUBSTRATE ANALOG INHIBITOR</scope>
</reference>
<name>DAPA_ECOLI</name>
<gene>
    <name evidence="1" type="primary">dapA</name>
    <name type="ordered locus">b2478</name>
    <name type="ordered locus">JW2463</name>
</gene>
<organism>
    <name type="scientific">Escherichia coli (strain K12)</name>
    <dbReference type="NCBI Taxonomy" id="83333"/>
    <lineage>
        <taxon>Bacteria</taxon>
        <taxon>Pseudomonadati</taxon>
        <taxon>Pseudomonadota</taxon>
        <taxon>Gammaproteobacteria</taxon>
        <taxon>Enterobacterales</taxon>
        <taxon>Enterobacteriaceae</taxon>
        <taxon>Escherichia</taxon>
    </lineage>
</organism>
<feature type="chain" id="PRO_0000103110" description="4-hydroxy-tetrahydrodipicolinate synthase">
    <location>
        <begin position="1"/>
        <end position="292"/>
    </location>
</feature>
<feature type="active site" description="Proton donor/acceptor">
    <location>
        <position position="133"/>
    </location>
</feature>
<feature type="active site" description="Schiff-base intermediate with substrate">
    <location>
        <position position="161"/>
    </location>
</feature>
<feature type="binding site" evidence="1 10 12">
    <location>
        <position position="45"/>
    </location>
    <ligand>
        <name>pyruvate</name>
        <dbReference type="ChEBI" id="CHEBI:15361"/>
    </ligand>
</feature>
<feature type="binding site" evidence="1 10 12">
    <location>
        <position position="203"/>
    </location>
    <ligand>
        <name>pyruvate</name>
        <dbReference type="ChEBI" id="CHEBI:15361"/>
    </ligand>
</feature>
<feature type="site" description="Part of a proton relay during catalysis">
    <location>
        <position position="44"/>
    </location>
</feature>
<feature type="site" description="L-lysine inhibitor binding; via carbonyl oxygen">
    <location>
        <position position="49"/>
    </location>
</feature>
<feature type="site" description="L-lysine inhibitor binding">
    <location>
        <position position="80"/>
    </location>
</feature>
<feature type="site" description="L-lysine inhibitor binding">
    <location>
        <position position="84"/>
    </location>
</feature>
<feature type="site" description="L-lysine inhibitor binding">
    <location>
        <position position="106"/>
    </location>
</feature>
<feature type="site" description="Part of a proton relay during catalysis">
    <location>
        <position position="107"/>
    </location>
</feature>
<feature type="mutagenesis site" description="8% of wild-type activity. 4-fold decrease in affinity for pyruvate, but nearly no change in that for (S)-ASA." evidence="3 9">
    <original>T</original>
    <variation>S</variation>
    <location>
        <position position="44"/>
    </location>
</feature>
<feature type="mutagenesis site" description="Reduced kcat by 99.9%." evidence="3 9">
    <original>T</original>
    <variation>V</variation>
    <location>
        <position position="44"/>
    </location>
</feature>
<feature type="mutagenesis site" description="Reduced kcat by 90%." evidence="3 8">
    <original>Y</original>
    <variation>F</variation>
    <location>
        <position position="107"/>
    </location>
</feature>
<feature type="mutagenesis site" description="Reduced activity by 95%. Reduced affinity for both substrates. Exists as a mixture of monomer, dimer and tetramer in solution. Has significantly lower thermal stability than the wild-type enzyme." evidence="3 8">
    <original>Y</original>
    <variation>W</variation>
    <location>
        <position position="107"/>
    </location>
</feature>
<feature type="mutagenesis site" description="Reduced kcat by 99.7%. Reduced affinity for both substrates." evidence="3">
    <original>Y</original>
    <variation>F</variation>
    <location>
        <position position="133"/>
    </location>
</feature>
<feature type="mutagenesis site" description="Strongly increased KM for L-aspartate 4-semialdehyde. No effect on KM for pyruvate. Reduced activity by 99.7%." evidence="5">
    <original>R</original>
    <variation>A</variation>
    <variation>H</variation>
    <location>
        <position position="138"/>
    </location>
</feature>
<feature type="mutagenesis site" description="0.1% of wild-type activity. 3-fold decrease in affinity for pyruvate, and 2-fold decrease in that for (S)-ASA." evidence="10">
    <original>K</original>
    <variation>A</variation>
    <location>
        <position position="161"/>
    </location>
</feature>
<feature type="mutagenesis site" description="0.35% of wild-type activity. 3-fold decrease in affinity for pyruvate, but nearly no change in that for (S)-ASA." evidence="10">
    <original>K</original>
    <variation>R</variation>
    <location>
        <position position="161"/>
    </location>
</feature>
<feature type="mutagenesis site" description="1.4 to 2.5% of wild-type activity. Decrease in affinity for pyruvate, but nearly no change in that for (S)-ASA. Exists as a dimer in solution." evidence="6">
    <original>L</original>
    <variation>Y</variation>
    <variation>D</variation>
    <location>
        <position position="197"/>
    </location>
</feature>
<feature type="sequence conflict" description="In Ref. 1; AAA23665." evidence="16" ref="1">
    <original>A</original>
    <variation>T</variation>
    <location>
        <position position="207"/>
    </location>
</feature>
<feature type="sequence conflict" description="In Ref. 1; AAA23665." evidence="16" ref="1">
    <original>G</original>
    <variation>E</variation>
    <location>
        <position position="224"/>
    </location>
</feature>
<feature type="strand" evidence="19">
    <location>
        <begin position="4"/>
        <end position="8"/>
    </location>
</feature>
<feature type="strand" evidence="20">
    <location>
        <begin position="17"/>
        <end position="19"/>
    </location>
</feature>
<feature type="helix" evidence="19">
    <location>
        <begin position="21"/>
        <end position="34"/>
    </location>
</feature>
<feature type="strand" evidence="19">
    <location>
        <begin position="38"/>
        <end position="43"/>
    </location>
</feature>
<feature type="turn" evidence="19">
    <location>
        <begin position="44"/>
        <end position="47"/>
    </location>
</feature>
<feature type="helix" evidence="19">
    <location>
        <begin position="48"/>
        <end position="50"/>
    </location>
</feature>
<feature type="helix" evidence="19">
    <location>
        <begin position="53"/>
        <end position="67"/>
    </location>
</feature>
<feature type="strand" evidence="19">
    <location>
        <begin position="73"/>
        <end position="76"/>
    </location>
</feature>
<feature type="helix" evidence="19">
    <location>
        <begin position="82"/>
        <end position="91"/>
    </location>
</feature>
<feature type="turn" evidence="19">
    <location>
        <begin position="92"/>
        <end position="94"/>
    </location>
</feature>
<feature type="strand" evidence="19">
    <location>
        <begin position="98"/>
        <end position="103"/>
    </location>
</feature>
<feature type="helix" evidence="19">
    <location>
        <begin position="112"/>
        <end position="123"/>
    </location>
</feature>
<feature type="strand" evidence="19">
    <location>
        <begin position="130"/>
        <end position="133"/>
    </location>
</feature>
<feature type="helix" evidence="19">
    <location>
        <begin position="136"/>
        <end position="139"/>
    </location>
</feature>
<feature type="helix" evidence="19">
    <location>
        <begin position="145"/>
        <end position="152"/>
    </location>
</feature>
<feature type="strand" evidence="19">
    <location>
        <begin position="157"/>
        <end position="160"/>
    </location>
</feature>
<feature type="helix" evidence="19">
    <location>
        <begin position="169"/>
        <end position="174"/>
    </location>
</feature>
<feature type="strand" evidence="19">
    <location>
        <begin position="181"/>
        <end position="186"/>
    </location>
</feature>
<feature type="helix" evidence="19">
    <location>
        <begin position="188"/>
        <end position="190"/>
    </location>
</feature>
<feature type="helix" evidence="19">
    <location>
        <begin position="191"/>
        <end position="196"/>
    </location>
</feature>
<feature type="strand" evidence="19">
    <location>
        <begin position="201"/>
        <end position="205"/>
    </location>
</feature>
<feature type="helix" evidence="19">
    <location>
        <begin position="206"/>
        <end position="208"/>
    </location>
</feature>
<feature type="helix" evidence="19">
    <location>
        <begin position="211"/>
        <end position="222"/>
    </location>
</feature>
<feature type="helix" evidence="19">
    <location>
        <begin position="226"/>
        <end position="242"/>
    </location>
</feature>
<feature type="strand" evidence="19">
    <location>
        <begin position="245"/>
        <end position="247"/>
    </location>
</feature>
<feature type="helix" evidence="19">
    <location>
        <begin position="250"/>
        <end position="258"/>
    </location>
</feature>
<feature type="strand" evidence="19">
    <location>
        <begin position="261"/>
        <end position="263"/>
    </location>
</feature>
<feature type="helix" evidence="19">
    <location>
        <begin position="276"/>
        <end position="288"/>
    </location>
</feature>